<gene>
    <name evidence="1" type="primary">pdxH</name>
    <name type="ordered locus">ACICU_03516</name>
</gene>
<name>PDXH_ACIBC</name>
<feature type="chain" id="PRO_1000186280" description="Pyridoxine/pyridoxamine 5'-phosphate oxidase">
    <location>
        <begin position="1"/>
        <end position="218"/>
    </location>
</feature>
<feature type="binding site" evidence="1">
    <location>
        <begin position="12"/>
        <end position="15"/>
    </location>
    <ligand>
        <name>substrate</name>
    </ligand>
</feature>
<feature type="binding site" evidence="1">
    <location>
        <begin position="65"/>
        <end position="70"/>
    </location>
    <ligand>
        <name>FMN</name>
        <dbReference type="ChEBI" id="CHEBI:58210"/>
    </ligand>
</feature>
<feature type="binding site" evidence="1">
    <location>
        <position position="70"/>
    </location>
    <ligand>
        <name>substrate</name>
    </ligand>
</feature>
<feature type="binding site" evidence="1">
    <location>
        <begin position="80"/>
        <end position="81"/>
    </location>
    <ligand>
        <name>FMN</name>
        <dbReference type="ChEBI" id="CHEBI:58210"/>
    </ligand>
</feature>
<feature type="binding site" evidence="1">
    <location>
        <position position="87"/>
    </location>
    <ligand>
        <name>FMN</name>
        <dbReference type="ChEBI" id="CHEBI:58210"/>
    </ligand>
</feature>
<feature type="binding site" evidence="1">
    <location>
        <position position="109"/>
    </location>
    <ligand>
        <name>FMN</name>
        <dbReference type="ChEBI" id="CHEBI:58210"/>
    </ligand>
</feature>
<feature type="binding site" evidence="1">
    <location>
        <position position="127"/>
    </location>
    <ligand>
        <name>substrate</name>
    </ligand>
</feature>
<feature type="binding site" evidence="1">
    <location>
        <position position="131"/>
    </location>
    <ligand>
        <name>substrate</name>
    </ligand>
</feature>
<feature type="binding site" evidence="1">
    <location>
        <position position="135"/>
    </location>
    <ligand>
        <name>substrate</name>
    </ligand>
</feature>
<feature type="binding site" evidence="1">
    <location>
        <begin position="145"/>
        <end position="146"/>
    </location>
    <ligand>
        <name>FMN</name>
        <dbReference type="ChEBI" id="CHEBI:58210"/>
    </ligand>
</feature>
<feature type="binding site" evidence="1">
    <location>
        <position position="191"/>
    </location>
    <ligand>
        <name>FMN</name>
        <dbReference type="ChEBI" id="CHEBI:58210"/>
    </ligand>
</feature>
<feature type="binding site" evidence="1">
    <location>
        <begin position="197"/>
        <end position="199"/>
    </location>
    <ligand>
        <name>substrate</name>
    </ligand>
</feature>
<feature type="binding site" evidence="1">
    <location>
        <position position="201"/>
    </location>
    <ligand>
        <name>FMN</name>
        <dbReference type="ChEBI" id="CHEBI:58210"/>
    </ligand>
</feature>
<reference key="1">
    <citation type="journal article" date="2008" name="Antimicrob. Agents Chemother.">
        <title>Whole-genome pyrosequencing of an epidemic multidrug-resistant Acinetobacter baumannii strain belonging to the European clone II group.</title>
        <authorList>
            <person name="Iacono M."/>
            <person name="Villa L."/>
            <person name="Fortini D."/>
            <person name="Bordoni R."/>
            <person name="Imperi F."/>
            <person name="Bonnal R.J."/>
            <person name="Sicheritz-Ponten T."/>
            <person name="De Bellis G."/>
            <person name="Visca P."/>
            <person name="Cassone A."/>
            <person name="Carattoli A."/>
        </authorList>
    </citation>
    <scope>NUCLEOTIDE SEQUENCE [LARGE SCALE GENOMIC DNA]</scope>
    <source>
        <strain>ACICU</strain>
    </source>
</reference>
<sequence length="218" mass="25474">MSDVIKDLSELRLSYEQGELYETQVASNPHEQFLGWFNHALAANLHEPYAMSLATASASGRPHVRTVLLRGATEAGYDFYTNYDSQKGIDLAENPYAELLFYWPSLERQVRVGGHVVKIPEQESTDYYHKRPRDSQIAAHISTPQSGKIESRELLQQRFQDLQQQVQSREVLDKPEFWGGYRLQPDYYEFWQGRPNRLHDRLSYEKIDGQWTLHRLMP</sequence>
<protein>
    <recommendedName>
        <fullName evidence="1">Pyridoxine/pyridoxamine 5'-phosphate oxidase</fullName>
        <ecNumber evidence="1">1.4.3.5</ecNumber>
    </recommendedName>
    <alternativeName>
        <fullName evidence="1">PNP/PMP oxidase</fullName>
        <shortName evidence="1">PNPOx</shortName>
    </alternativeName>
    <alternativeName>
        <fullName evidence="1">Pyridoxal 5'-phosphate synthase</fullName>
    </alternativeName>
</protein>
<dbReference type="EC" id="1.4.3.5" evidence="1"/>
<dbReference type="EMBL" id="CP000863">
    <property type="protein sequence ID" value="ACC58825.1"/>
    <property type="molecule type" value="Genomic_DNA"/>
</dbReference>
<dbReference type="RefSeq" id="WP_001286115.1">
    <property type="nucleotide sequence ID" value="NZ_CP031380.1"/>
</dbReference>
<dbReference type="SMR" id="B2I1H7"/>
<dbReference type="KEGG" id="abc:ACICU_03516"/>
<dbReference type="HOGENOM" id="CLU_032263_2_2_6"/>
<dbReference type="UniPathway" id="UPA01068">
    <property type="reaction ID" value="UER00304"/>
</dbReference>
<dbReference type="UniPathway" id="UPA01068">
    <property type="reaction ID" value="UER00305"/>
</dbReference>
<dbReference type="Proteomes" id="UP000008839">
    <property type="component" value="Chromosome"/>
</dbReference>
<dbReference type="GO" id="GO:0010181">
    <property type="term" value="F:FMN binding"/>
    <property type="evidence" value="ECO:0007669"/>
    <property type="project" value="UniProtKB-UniRule"/>
</dbReference>
<dbReference type="GO" id="GO:0004733">
    <property type="term" value="F:pyridoxamine phosphate oxidase activity"/>
    <property type="evidence" value="ECO:0007669"/>
    <property type="project" value="UniProtKB-UniRule"/>
</dbReference>
<dbReference type="GO" id="GO:0008615">
    <property type="term" value="P:pyridoxine biosynthetic process"/>
    <property type="evidence" value="ECO:0007669"/>
    <property type="project" value="UniProtKB-KW"/>
</dbReference>
<dbReference type="Gene3D" id="2.30.110.10">
    <property type="entry name" value="Electron Transport, Fmn-binding Protein, Chain A"/>
    <property type="match status" value="1"/>
</dbReference>
<dbReference type="HAMAP" id="MF_01629">
    <property type="entry name" value="PdxH"/>
    <property type="match status" value="1"/>
</dbReference>
<dbReference type="InterPro" id="IPR000659">
    <property type="entry name" value="Pyridox_Oxase"/>
</dbReference>
<dbReference type="InterPro" id="IPR019740">
    <property type="entry name" value="Pyridox_Oxase_CS"/>
</dbReference>
<dbReference type="InterPro" id="IPR011576">
    <property type="entry name" value="Pyridox_Oxase_N"/>
</dbReference>
<dbReference type="InterPro" id="IPR019576">
    <property type="entry name" value="Pyridoxamine_oxidase_dimer_C"/>
</dbReference>
<dbReference type="InterPro" id="IPR012349">
    <property type="entry name" value="Split_barrel_FMN-bd"/>
</dbReference>
<dbReference type="NCBIfam" id="TIGR00558">
    <property type="entry name" value="pdxH"/>
    <property type="match status" value="1"/>
</dbReference>
<dbReference type="NCBIfam" id="NF004231">
    <property type="entry name" value="PRK05679.1"/>
    <property type="match status" value="1"/>
</dbReference>
<dbReference type="PANTHER" id="PTHR10851:SF0">
    <property type="entry name" value="PYRIDOXINE-5'-PHOSPHATE OXIDASE"/>
    <property type="match status" value="1"/>
</dbReference>
<dbReference type="PANTHER" id="PTHR10851">
    <property type="entry name" value="PYRIDOXINE-5-PHOSPHATE OXIDASE"/>
    <property type="match status" value="1"/>
</dbReference>
<dbReference type="Pfam" id="PF10590">
    <property type="entry name" value="PNP_phzG_C"/>
    <property type="match status" value="1"/>
</dbReference>
<dbReference type="Pfam" id="PF01243">
    <property type="entry name" value="PNPOx_N"/>
    <property type="match status" value="1"/>
</dbReference>
<dbReference type="PIRSF" id="PIRSF000190">
    <property type="entry name" value="Pyd_amn-ph_oxd"/>
    <property type="match status" value="1"/>
</dbReference>
<dbReference type="SUPFAM" id="SSF50475">
    <property type="entry name" value="FMN-binding split barrel"/>
    <property type="match status" value="1"/>
</dbReference>
<dbReference type="PROSITE" id="PS01064">
    <property type="entry name" value="PYRIDOX_OXIDASE"/>
    <property type="match status" value="1"/>
</dbReference>
<comment type="function">
    <text evidence="1">Catalyzes the oxidation of either pyridoxine 5'-phosphate (PNP) or pyridoxamine 5'-phosphate (PMP) into pyridoxal 5'-phosphate (PLP).</text>
</comment>
<comment type="catalytic activity">
    <reaction evidence="1">
        <text>pyridoxamine 5'-phosphate + O2 + H2O = pyridoxal 5'-phosphate + H2O2 + NH4(+)</text>
        <dbReference type="Rhea" id="RHEA:15817"/>
        <dbReference type="ChEBI" id="CHEBI:15377"/>
        <dbReference type="ChEBI" id="CHEBI:15379"/>
        <dbReference type="ChEBI" id="CHEBI:16240"/>
        <dbReference type="ChEBI" id="CHEBI:28938"/>
        <dbReference type="ChEBI" id="CHEBI:58451"/>
        <dbReference type="ChEBI" id="CHEBI:597326"/>
        <dbReference type="EC" id="1.4.3.5"/>
    </reaction>
</comment>
<comment type="catalytic activity">
    <reaction evidence="1">
        <text>pyridoxine 5'-phosphate + O2 = pyridoxal 5'-phosphate + H2O2</text>
        <dbReference type="Rhea" id="RHEA:15149"/>
        <dbReference type="ChEBI" id="CHEBI:15379"/>
        <dbReference type="ChEBI" id="CHEBI:16240"/>
        <dbReference type="ChEBI" id="CHEBI:58589"/>
        <dbReference type="ChEBI" id="CHEBI:597326"/>
        <dbReference type="EC" id="1.4.3.5"/>
    </reaction>
</comment>
<comment type="cofactor">
    <cofactor evidence="1">
        <name>FMN</name>
        <dbReference type="ChEBI" id="CHEBI:58210"/>
    </cofactor>
    <text evidence="1">Binds 1 FMN per subunit.</text>
</comment>
<comment type="pathway">
    <text evidence="1">Cofactor metabolism; pyridoxal 5'-phosphate salvage; pyridoxal 5'-phosphate from pyridoxamine 5'-phosphate: step 1/1.</text>
</comment>
<comment type="pathway">
    <text evidence="1">Cofactor metabolism; pyridoxal 5'-phosphate salvage; pyridoxal 5'-phosphate from pyridoxine 5'-phosphate: step 1/1.</text>
</comment>
<comment type="subunit">
    <text evidence="1">Homodimer.</text>
</comment>
<comment type="similarity">
    <text evidence="1">Belongs to the pyridoxamine 5'-phosphate oxidase family.</text>
</comment>
<evidence type="ECO:0000255" key="1">
    <source>
        <dbReference type="HAMAP-Rule" id="MF_01629"/>
    </source>
</evidence>
<keyword id="KW-0285">Flavoprotein</keyword>
<keyword id="KW-0288">FMN</keyword>
<keyword id="KW-0560">Oxidoreductase</keyword>
<keyword id="KW-0664">Pyridoxine biosynthesis</keyword>
<proteinExistence type="inferred from homology"/>
<organism>
    <name type="scientific">Acinetobacter baumannii (strain ACICU)</name>
    <dbReference type="NCBI Taxonomy" id="405416"/>
    <lineage>
        <taxon>Bacteria</taxon>
        <taxon>Pseudomonadati</taxon>
        <taxon>Pseudomonadota</taxon>
        <taxon>Gammaproteobacteria</taxon>
        <taxon>Moraxellales</taxon>
        <taxon>Moraxellaceae</taxon>
        <taxon>Acinetobacter</taxon>
        <taxon>Acinetobacter calcoaceticus/baumannii complex</taxon>
    </lineage>
</organism>
<accession>B2I1H7</accession>